<keyword id="KW-1185">Reference proteome</keyword>
<keyword id="KW-0687">Ribonucleoprotein</keyword>
<keyword id="KW-0689">Ribosomal protein</keyword>
<comment type="function">
    <text evidence="1">Involved in the binding of tRNA to the ribosomes.</text>
</comment>
<comment type="subunit">
    <text evidence="1">Part of the 30S ribosomal subunit.</text>
</comment>
<comment type="similarity">
    <text evidence="1">Belongs to the universal ribosomal protein uS10 family.</text>
</comment>
<gene>
    <name evidence="1" type="primary">rpsJ</name>
    <name type="ordered locus">Cpha266_2424</name>
</gene>
<accession>A1BJ35</accession>
<organism>
    <name type="scientific">Chlorobium phaeobacteroides (strain DSM 266 / SMG 266 / 2430)</name>
    <dbReference type="NCBI Taxonomy" id="290317"/>
    <lineage>
        <taxon>Bacteria</taxon>
        <taxon>Pseudomonadati</taxon>
        <taxon>Chlorobiota</taxon>
        <taxon>Chlorobiia</taxon>
        <taxon>Chlorobiales</taxon>
        <taxon>Chlorobiaceae</taxon>
        <taxon>Chlorobium/Pelodictyon group</taxon>
        <taxon>Chlorobium</taxon>
    </lineage>
</organism>
<proteinExistence type="inferred from homology"/>
<protein>
    <recommendedName>
        <fullName evidence="1">Small ribosomal subunit protein uS10</fullName>
    </recommendedName>
    <alternativeName>
        <fullName evidence="2">30S ribosomal protein S10</fullName>
    </alternativeName>
</protein>
<dbReference type="EMBL" id="CP000492">
    <property type="protein sequence ID" value="ABL66412.1"/>
    <property type="molecule type" value="Genomic_DNA"/>
</dbReference>
<dbReference type="RefSeq" id="WP_011746194.1">
    <property type="nucleotide sequence ID" value="NC_008639.1"/>
</dbReference>
<dbReference type="SMR" id="A1BJ35"/>
<dbReference type="STRING" id="290317.Cpha266_2424"/>
<dbReference type="KEGG" id="cph:Cpha266_2424"/>
<dbReference type="eggNOG" id="COG0051">
    <property type="taxonomic scope" value="Bacteria"/>
</dbReference>
<dbReference type="HOGENOM" id="CLU_122625_1_3_10"/>
<dbReference type="OrthoDB" id="9804464at2"/>
<dbReference type="Proteomes" id="UP000008701">
    <property type="component" value="Chromosome"/>
</dbReference>
<dbReference type="GO" id="GO:1990904">
    <property type="term" value="C:ribonucleoprotein complex"/>
    <property type="evidence" value="ECO:0007669"/>
    <property type="project" value="UniProtKB-KW"/>
</dbReference>
<dbReference type="GO" id="GO:0005840">
    <property type="term" value="C:ribosome"/>
    <property type="evidence" value="ECO:0007669"/>
    <property type="project" value="UniProtKB-KW"/>
</dbReference>
<dbReference type="GO" id="GO:0003735">
    <property type="term" value="F:structural constituent of ribosome"/>
    <property type="evidence" value="ECO:0007669"/>
    <property type="project" value="InterPro"/>
</dbReference>
<dbReference type="GO" id="GO:0000049">
    <property type="term" value="F:tRNA binding"/>
    <property type="evidence" value="ECO:0007669"/>
    <property type="project" value="UniProtKB-UniRule"/>
</dbReference>
<dbReference type="GO" id="GO:0006412">
    <property type="term" value="P:translation"/>
    <property type="evidence" value="ECO:0007669"/>
    <property type="project" value="UniProtKB-UniRule"/>
</dbReference>
<dbReference type="FunFam" id="3.30.70.600:FF:000003">
    <property type="entry name" value="30S ribosomal protein S10"/>
    <property type="match status" value="1"/>
</dbReference>
<dbReference type="Gene3D" id="3.30.70.600">
    <property type="entry name" value="Ribosomal protein S10 domain"/>
    <property type="match status" value="1"/>
</dbReference>
<dbReference type="HAMAP" id="MF_00508">
    <property type="entry name" value="Ribosomal_uS10"/>
    <property type="match status" value="1"/>
</dbReference>
<dbReference type="InterPro" id="IPR001848">
    <property type="entry name" value="Ribosomal_uS10"/>
</dbReference>
<dbReference type="InterPro" id="IPR018268">
    <property type="entry name" value="Ribosomal_uS10_CS"/>
</dbReference>
<dbReference type="InterPro" id="IPR027486">
    <property type="entry name" value="Ribosomal_uS10_dom"/>
</dbReference>
<dbReference type="InterPro" id="IPR036838">
    <property type="entry name" value="Ribosomal_uS10_dom_sf"/>
</dbReference>
<dbReference type="NCBIfam" id="NF001861">
    <property type="entry name" value="PRK00596.1"/>
    <property type="match status" value="1"/>
</dbReference>
<dbReference type="NCBIfam" id="TIGR01049">
    <property type="entry name" value="rpsJ_bact"/>
    <property type="match status" value="1"/>
</dbReference>
<dbReference type="PANTHER" id="PTHR11700">
    <property type="entry name" value="30S RIBOSOMAL PROTEIN S10 FAMILY MEMBER"/>
    <property type="match status" value="1"/>
</dbReference>
<dbReference type="Pfam" id="PF00338">
    <property type="entry name" value="Ribosomal_S10"/>
    <property type="match status" value="1"/>
</dbReference>
<dbReference type="PRINTS" id="PR00971">
    <property type="entry name" value="RIBOSOMALS10"/>
</dbReference>
<dbReference type="SMART" id="SM01403">
    <property type="entry name" value="Ribosomal_S10"/>
    <property type="match status" value="1"/>
</dbReference>
<dbReference type="SUPFAM" id="SSF54999">
    <property type="entry name" value="Ribosomal protein S10"/>
    <property type="match status" value="1"/>
</dbReference>
<dbReference type="PROSITE" id="PS00361">
    <property type="entry name" value="RIBOSOMAL_S10"/>
    <property type="match status" value="1"/>
</dbReference>
<feature type="chain" id="PRO_1000015008" description="Small ribosomal subunit protein uS10">
    <location>
        <begin position="1"/>
        <end position="103"/>
    </location>
</feature>
<sequence>MAAQQKIRIKLKSYDHSLVDKWALRIIDVVKQTDAIIFGPIPLPTKAHVYTVNRSPHVDKKSREQFSFSSHKRLIEIINPTSRTIDMLMKLELPSGVDVEIKS</sequence>
<evidence type="ECO:0000255" key="1">
    <source>
        <dbReference type="HAMAP-Rule" id="MF_00508"/>
    </source>
</evidence>
<evidence type="ECO:0000305" key="2"/>
<name>RS10_CHLPD</name>
<reference key="1">
    <citation type="submission" date="2006-12" db="EMBL/GenBank/DDBJ databases">
        <title>Complete sequence of Chlorobium phaeobacteroides DSM 266.</title>
        <authorList>
            <consortium name="US DOE Joint Genome Institute"/>
            <person name="Copeland A."/>
            <person name="Lucas S."/>
            <person name="Lapidus A."/>
            <person name="Barry K."/>
            <person name="Detter J.C."/>
            <person name="Glavina del Rio T."/>
            <person name="Hammon N."/>
            <person name="Israni S."/>
            <person name="Pitluck S."/>
            <person name="Goltsman E."/>
            <person name="Schmutz J."/>
            <person name="Larimer F."/>
            <person name="Land M."/>
            <person name="Hauser L."/>
            <person name="Mikhailova N."/>
            <person name="Li T."/>
            <person name="Overmann J."/>
            <person name="Bryant D.A."/>
            <person name="Richardson P."/>
        </authorList>
    </citation>
    <scope>NUCLEOTIDE SEQUENCE [LARGE SCALE GENOMIC DNA]</scope>
    <source>
        <strain>DSM 266 / SMG 266 / 2430</strain>
    </source>
</reference>